<dbReference type="EMBL" id="AC005312">
    <property type="protein sequence ID" value="AAC78509.1"/>
    <property type="status" value="ALT_INIT"/>
    <property type="molecule type" value="Genomic_DNA"/>
</dbReference>
<dbReference type="EMBL" id="CP002685">
    <property type="protein sequence ID" value="AEC05561.1"/>
    <property type="molecule type" value="Genomic_DNA"/>
</dbReference>
<dbReference type="PIR" id="F84434">
    <property type="entry name" value="F84434"/>
</dbReference>
<dbReference type="SMR" id="Q9ZVR5"/>
<dbReference type="FunCoup" id="Q9ZVR5">
    <property type="interactions" value="20"/>
</dbReference>
<dbReference type="STRING" id="3702.Q9ZVR5"/>
<dbReference type="PaxDb" id="3702-AT2G02250.1"/>
<dbReference type="ProteomicsDB" id="248970"/>
<dbReference type="EnsemblPlants" id="AT2G02250.1">
    <property type="protein sequence ID" value="AT2G02250.1"/>
    <property type="gene ID" value="AT2G02250"/>
</dbReference>
<dbReference type="GeneID" id="814756"/>
<dbReference type="Gramene" id="AT2G02250.1">
    <property type="protein sequence ID" value="AT2G02250.1"/>
    <property type="gene ID" value="AT2G02250"/>
</dbReference>
<dbReference type="KEGG" id="ath:AT2G02250"/>
<dbReference type="Araport" id="AT2G02250"/>
<dbReference type="TAIR" id="AT2G02250">
    <property type="gene designation" value="PP2-B2"/>
</dbReference>
<dbReference type="eggNOG" id="ENOG502QRA4">
    <property type="taxonomic scope" value="Eukaryota"/>
</dbReference>
<dbReference type="HOGENOM" id="CLU_050973_0_0_1"/>
<dbReference type="InParanoid" id="Q9ZVR5"/>
<dbReference type="OMA" id="HMARILR"/>
<dbReference type="PRO" id="PR:Q9ZVR5"/>
<dbReference type="Proteomes" id="UP000006548">
    <property type="component" value="Chromosome 2"/>
</dbReference>
<dbReference type="ExpressionAtlas" id="Q9ZVR5">
    <property type="expression patterns" value="baseline and differential"/>
</dbReference>
<dbReference type="GO" id="GO:0030246">
    <property type="term" value="F:carbohydrate binding"/>
    <property type="evidence" value="ECO:0000250"/>
    <property type="project" value="TAIR"/>
</dbReference>
<dbReference type="CDD" id="cd22162">
    <property type="entry name" value="F-box_AtSKIP3-like"/>
    <property type="match status" value="1"/>
</dbReference>
<dbReference type="FunFam" id="1.20.1280.50:FF:000112">
    <property type="entry name" value="F-box protein PP2-B1"/>
    <property type="match status" value="1"/>
</dbReference>
<dbReference type="Gene3D" id="1.20.1280.50">
    <property type="match status" value="1"/>
</dbReference>
<dbReference type="InterPro" id="IPR036047">
    <property type="entry name" value="F-box-like_dom_sf"/>
</dbReference>
<dbReference type="InterPro" id="IPR001810">
    <property type="entry name" value="F-box_dom"/>
</dbReference>
<dbReference type="InterPro" id="IPR025886">
    <property type="entry name" value="PP2-like"/>
</dbReference>
<dbReference type="PANTHER" id="PTHR32278">
    <property type="entry name" value="F-BOX DOMAIN-CONTAINING PROTEIN"/>
    <property type="match status" value="1"/>
</dbReference>
<dbReference type="PANTHER" id="PTHR32278:SF57">
    <property type="entry name" value="F-BOX PROTEIN PP2-B2-RELATED"/>
    <property type="match status" value="1"/>
</dbReference>
<dbReference type="Pfam" id="PF00646">
    <property type="entry name" value="F-box"/>
    <property type="match status" value="1"/>
</dbReference>
<dbReference type="Pfam" id="PF14299">
    <property type="entry name" value="PP2"/>
    <property type="match status" value="1"/>
</dbReference>
<dbReference type="SMART" id="SM00256">
    <property type="entry name" value="FBOX"/>
    <property type="match status" value="1"/>
</dbReference>
<dbReference type="SUPFAM" id="SSF81383">
    <property type="entry name" value="F-box domain"/>
    <property type="match status" value="1"/>
</dbReference>
<dbReference type="PROSITE" id="PS50181">
    <property type="entry name" value="FBOX"/>
    <property type="match status" value="1"/>
</dbReference>
<gene>
    <name type="primary">PP2B2</name>
    <name type="ordered locus">At2g02250</name>
    <name type="ORF">T16F16.4</name>
</gene>
<comment type="sequence caution" evidence="3">
    <conflict type="erroneous initiation">
        <sequence resource="EMBL-CDS" id="AAC78509"/>
    </conflict>
    <text>Truncated N-terminus.</text>
</comment>
<protein>
    <recommendedName>
        <fullName>Putative F-box protein PP2-B2</fullName>
    </recommendedName>
    <alternativeName>
        <fullName>Protein PHLOEM PROTEIN 2-LIKE B2</fullName>
        <shortName>AtPP2-B2</shortName>
    </alternativeName>
</protein>
<feature type="chain" id="PRO_0000272212" description="Putative F-box protein PP2-B2">
    <location>
        <begin position="1"/>
        <end position="310"/>
    </location>
</feature>
<feature type="domain" description="F-box" evidence="1">
    <location>
        <begin position="44"/>
        <end position="90"/>
    </location>
</feature>
<feature type="region of interest" description="Disordered" evidence="2">
    <location>
        <begin position="1"/>
        <end position="34"/>
    </location>
</feature>
<reference key="1">
    <citation type="journal article" date="1999" name="Nature">
        <title>Sequence and analysis of chromosome 2 of the plant Arabidopsis thaliana.</title>
        <authorList>
            <person name="Lin X."/>
            <person name="Kaul S."/>
            <person name="Rounsley S.D."/>
            <person name="Shea T.P."/>
            <person name="Benito M.-I."/>
            <person name="Town C.D."/>
            <person name="Fujii C.Y."/>
            <person name="Mason T.M."/>
            <person name="Bowman C.L."/>
            <person name="Barnstead M.E."/>
            <person name="Feldblyum T.V."/>
            <person name="Buell C.R."/>
            <person name="Ketchum K.A."/>
            <person name="Lee J.J."/>
            <person name="Ronning C.M."/>
            <person name="Koo H.L."/>
            <person name="Moffat K.S."/>
            <person name="Cronin L.A."/>
            <person name="Shen M."/>
            <person name="Pai G."/>
            <person name="Van Aken S."/>
            <person name="Umayam L."/>
            <person name="Tallon L.J."/>
            <person name="Gill J.E."/>
            <person name="Adams M.D."/>
            <person name="Carrera A.J."/>
            <person name="Creasy T.H."/>
            <person name="Goodman H.M."/>
            <person name="Somerville C.R."/>
            <person name="Copenhaver G.P."/>
            <person name="Preuss D."/>
            <person name="Nierman W.C."/>
            <person name="White O."/>
            <person name="Eisen J.A."/>
            <person name="Salzberg S.L."/>
            <person name="Fraser C.M."/>
            <person name="Venter J.C."/>
        </authorList>
    </citation>
    <scope>NUCLEOTIDE SEQUENCE [LARGE SCALE GENOMIC DNA]</scope>
    <source>
        <strain>cv. Columbia</strain>
    </source>
</reference>
<reference key="2">
    <citation type="journal article" date="2017" name="Plant J.">
        <title>Araport11: a complete reannotation of the Arabidopsis thaliana reference genome.</title>
        <authorList>
            <person name="Cheng C.Y."/>
            <person name="Krishnakumar V."/>
            <person name="Chan A.P."/>
            <person name="Thibaud-Nissen F."/>
            <person name="Schobel S."/>
            <person name="Town C.D."/>
        </authorList>
    </citation>
    <scope>GENOME REANNOTATION</scope>
    <source>
        <strain>cv. Columbia</strain>
    </source>
</reference>
<reference key="3">
    <citation type="journal article" date="2003" name="Plant Physiol.">
        <title>Diversity of the superfamily of phloem lectins (phloem protein 2) in angiosperms.</title>
        <authorList>
            <person name="Dinant S."/>
            <person name="Clark A.M."/>
            <person name="Zhu Y."/>
            <person name="Vilaine F."/>
            <person name="Palauqui J.-C."/>
            <person name="Kusiak C."/>
            <person name="Thompson G.A."/>
        </authorList>
    </citation>
    <scope>GENE FAMILY</scope>
    <scope>NOMENCLATURE</scope>
</reference>
<evidence type="ECO:0000255" key="1">
    <source>
        <dbReference type="PROSITE-ProRule" id="PRU00080"/>
    </source>
</evidence>
<evidence type="ECO:0000256" key="2">
    <source>
        <dbReference type="SAM" id="MobiDB-lite"/>
    </source>
</evidence>
<evidence type="ECO:0000305" key="3"/>
<sequence length="310" mass="34930">MIQSTMGHKQSVDSRGKGRKVPGSSSMVQKHRVESSGGAIISGPSLFDNLPEDCISNIISFTSPRDACVAASVSKTFESAVNSDSVWDKFLPSDYSSLVPPSRVFSSKKELYFAICDNPVLVEDGGKSFWLEKENGKKCFMLSPKKSMWITWVSTPQYWRWISIPEARFEEVPELLNVCWFEVRGGMNTKELSPGTRYSAYIVFKTKNGCPNLGDVPVEATVGLVGQESSQRHIYFVGPSDQRRDRETRDVTRPTKRKDGWMEAELGQFFNESGCDVVDTSILEIKTPYWKRGLIIQGIEFRPTKSLFYI</sequence>
<accession>Q9ZVR5</accession>
<organism>
    <name type="scientific">Arabidopsis thaliana</name>
    <name type="common">Mouse-ear cress</name>
    <dbReference type="NCBI Taxonomy" id="3702"/>
    <lineage>
        <taxon>Eukaryota</taxon>
        <taxon>Viridiplantae</taxon>
        <taxon>Streptophyta</taxon>
        <taxon>Embryophyta</taxon>
        <taxon>Tracheophyta</taxon>
        <taxon>Spermatophyta</taxon>
        <taxon>Magnoliopsida</taxon>
        <taxon>eudicotyledons</taxon>
        <taxon>Gunneridae</taxon>
        <taxon>Pentapetalae</taxon>
        <taxon>rosids</taxon>
        <taxon>malvids</taxon>
        <taxon>Brassicales</taxon>
        <taxon>Brassicaceae</taxon>
        <taxon>Camelineae</taxon>
        <taxon>Arabidopsis</taxon>
    </lineage>
</organism>
<proteinExistence type="predicted"/>
<keyword id="KW-1185">Reference proteome</keyword>
<name>PP2B2_ARATH</name>